<name>KCNQ1_RAT</name>
<comment type="function">
    <text evidence="1 2 4 5">Pore-forming subunit of the voltage-gated potassium (Kv) channel involved in the regulation of cardiomyocyte excitability and important in normal development and functions of myocardium, inner ear, stomach and colon (By similarity). Associates with KCNE beta subunits that modulates current kinetics (By similarity) (PubMed:21911611). Induces a voltage-dependent by rapidly activating and slowly deactivating potassium-selective outward current (By similarity) (PubMed:11220365). Also promotes a delayed voltage activated potassium current showing outward rectification characteristic (PubMed:11220365). During beta-adrenergic receptor stimulation participates in cardiac repolarization by associating with KCNE1 to form the I(Ks) cardiac potassium current that increases the amplitude and slows down the activation kinetics of outward potassium current I(Ks) (By similarity) (PubMed:11220365). Muscarinic agonist oxotremorine-M strongly suppresses KCNQ1/KCNE1 current (By similarity). When associated with KCNE3, forms the potassium channel that is important for cyclic AMP-stimulated intestinal secretion of chloride ions (By similarity). This interaction with KCNE3 is reduced by 17beta-estradiol, resulting in the reduction of currents (PubMed:21911611). During conditions of increased substrate load, maintains the driving force for proximal tubular and intestinal sodium ions absorption, gastric acid secretion, and cAMP-induced jejunal chloride ions secretion (By similarity). Allows the provision of potassium ions to the luminal membrane of the secretory canaliculus in the resting state as well as during stimulated acid secretion (By similarity). When associated with KCNE2, forms a heterooligomer complex leading to currents with an apparently instantaneous activation, a rapid deactivation process and a linear current-voltage relationship and decreases the amplitude of the outward current (By similarity). When associated with KCNE4, inhibits voltage-gated potassium channel activity (By similarity). When associated with KCNE5, this complex only conducts current upon strong and continued depolarization (By similarity). Also forms a heterotetramer with KCNQ5 that has a voltage-gated potassium channel activity (By similarity). Binds with phosphatidylinositol 4,5-bisphosphate (By similarity). KCNQ1-KCNE2 channel associates with Na(+)-coupled myo-inositol symporter in the apical membrane of choroid plexus epithelium and regulates the myo-inositol gradient between blood and cerebrospinal fluid with an impact on neuron excitability (By similarity).</text>
</comment>
<comment type="catalytic activity">
    <reaction evidence="1">
        <text>K(+)(in) = K(+)(out)</text>
        <dbReference type="Rhea" id="RHEA:29463"/>
        <dbReference type="ChEBI" id="CHEBI:29103"/>
    </reaction>
</comment>
<comment type="activity regulation">
    <text evidence="1">PIP2 molecule is essential to activate KCNQ channels by inducing the coupling of the voltage-sensing domain (VSD) and the pore-forming domain (PD). Upon channel activation, PIP2 disrupts the VSD-calmodulin/CALM interactions, causing the release of CALM from the VSD which triggers the opening of the gate. Calcium potentiates KCNQ1 channel current through calcium-bound CALM. Calcium-bound CALM competes with PIP2 to stabilize the channel open state.</text>
</comment>
<comment type="subunit">
    <text evidence="1 2 5">Tetramer. Heterotetramer with KCNE1; targets to the membrane raft. Interacts (via C-terminus) with CALM; forms a heterooctameric structure (with 4:4 KCNQ1:CALM stoichiometry) in a calcium-independent manner. Interacts with AKAP9; targets protein kinase A (PKA) catalytic and regulatory subunits and protein phosphatase 1 (PP1) to the KCNQ1-KCNE1 complex, allowing PKA-mediated phosphorylation and increase of delayed rectifier potassium channel activity. Interacts with KCNE2; form a heterooligomer complex that targets to the membrane raft and leading to currents with an apparently instantaneous activation, a rapid deactivation process and a linear current-voltage relationship and decreases the amplitude of the outward current. Interacts with AP2M1; mediates estrogen-induced internalization via clathrin-coated vesicles. Interacts with NEDD4L; promotes internalization and decreases I(Ks) currents. Interacts with USP2; counteracts the NEDD4L-specific down-regulation of I(Ks) and restore plasma membrane localization. Heterotetramer with KCNQ5; has a voltage-gated potassium channel activity (By similarity). Interacts with KCNE3; produces a current with nearly instantaneous activation with a linear current-voltage relationship and alters membrane raft localization (By similarity) (PubMed:21911611). Interacts with KCNE4; impairs KCNQ1 localization in lipid rafts and inhibits voltage-gated potassium channel activity. Interacts with KCNE5; impairs KCNQ1 localization in lipid rafts and only conducts current upon strong and continued depolarization (By similarity). Interacts with SLC5A3; forms coregulatory channel-transporter complexes that modulate Na(+)-coupled myo-inositol influx through the transporter (By similarity).</text>
</comment>
<comment type="subcellular location">
    <subcellularLocation>
        <location evidence="1">Cell membrane</location>
        <topology evidence="1">Multi-pass membrane protein</topology>
    </subcellularLocation>
    <subcellularLocation>
        <location evidence="1">Cytoplasmic vesicle membrane</location>
    </subcellularLocation>
    <subcellularLocation>
        <location evidence="6">Early endosome</location>
    </subcellularLocation>
    <subcellularLocation>
        <location evidence="1">Membrane raft</location>
    </subcellularLocation>
    <subcellularLocation>
        <location evidence="1">Endoplasmic reticulum</location>
    </subcellularLocation>
    <subcellularLocation>
        <location evidence="1">Basolateral cell membrane</location>
    </subcellularLocation>
    <subcellularLocation>
        <location evidence="2">Apical cell membrane</location>
        <topology evidence="3">Multi-pass membrane protein</topology>
    </subcellularLocation>
    <text evidence="1 2">Colocalized with KCNE3 at the plasma membrane. Upon 17beta-oestradiol treatment, colocalizes with RAB5A at early endosome. Heterotetramer with KCNQ5 is highly retained at the endoplasmic reticulum and is localized outside of lipid raft microdomains. During the early stages of epithelial cell polarization induced by the calcium switch it is removed from the plasma membrane to the endoplasmic reticulum, where it is retained, and redistributed to the basolateral cell surface in a PI3K-dependent manner at a later stage. Colocalizes with SLC5A3 at the apical membrane of choroid plexus epithelium (By similarity).</text>
</comment>
<comment type="domain">
    <text evidence="1">Each channel subunit contains six transmembrane segments (S1-S6) with S1-S4 forming one voltage sensing domain (VSD) and S5-S6 contributing to form one quarter of an interlocking pore-forming domain (PD).</text>
</comment>
<comment type="domain">
    <text evidence="1">The segment S6 is involved in the inhibition of voltage-gated potassium channel activity by KCNE4.</text>
</comment>
<comment type="domain">
    <text evidence="1">The CALM binding domains correspond to the first two membrane-proximal helical regions that interact with a single calmodulin/CALM molecule forming a clamp-like structure. Binding of CALM C-terminus to the first helix is calcium-independent and is essential for assembly of the structure. Binding of CALM N-terminus to the second helix is calcium-dependent and regulates electrophysiological activity of the channel.</text>
</comment>
<comment type="domain">
    <text evidence="1">The C-terminal assembly domain carries the major determinants of tetramerization and subunit assembly specificity. Its coiled-coil region is four-stranded.</text>
</comment>
<comment type="PTM">
    <text evidence="1">Phosphorylation at Ser-27 by PKA; increases delayed rectifier potassium channel activity of the KCNQ1-KCNE1 complex through a macromolecular complex that includes PKA, PP1, and the targeting protein AKAP9.</text>
</comment>
<comment type="PTM">
    <text evidence="1">Ubiquitinated by NEDD4L; promotes internalization. The ubiquitinylated form is internalized through a clathrin-mediated endocytosis by interacting with AP2M1 and is recycled back to the cell membrane via RAB4A and RAB11A.</text>
</comment>
<comment type="PTM">
    <text evidence="1">Deubiquitinated by USP2; counteracts the NEDD4L-specific down-regulation of I(Ks) and restores the membrane localization.</text>
</comment>
<comment type="similarity">
    <text evidence="8">Belongs to the potassium channel family. KQT (TC 1.A.1.15) subfamily. Kv7.1/KCNQ1 sub-subfamily.</text>
</comment>
<comment type="sequence caution" evidence="8">
    <conflict type="frameshift">
        <sequence resource="EMBL-CDS" id="AAB51395"/>
    </conflict>
</comment>
<accession>Q9Z0N7</accession>
<accession>O08655</accession>
<feature type="chain" id="PRO_0000054027" description="Potassium voltage-gated channel subfamily KQT member 1">
    <location>
        <begin position="1"/>
        <end position="669"/>
    </location>
</feature>
<feature type="topological domain" description="Cytoplasmic" evidence="8">
    <location>
        <begin position="1"/>
        <end position="120"/>
    </location>
</feature>
<feature type="transmembrane region" description="Helical; Name=Segment S1" evidence="1">
    <location>
        <begin position="121"/>
        <end position="142"/>
    </location>
</feature>
<feature type="topological domain" description="Extracellular" evidence="8">
    <location>
        <begin position="143"/>
        <end position="153"/>
    </location>
</feature>
<feature type="transmembrane region" description="Helical; Name=Segment S2" evidence="1">
    <location>
        <begin position="154"/>
        <end position="176"/>
    </location>
</feature>
<feature type="topological domain" description="Cytoplasmic" evidence="8">
    <location>
        <begin position="177"/>
        <end position="192"/>
    </location>
</feature>
<feature type="transmembrane region" description="Helical; Name=Segment S3" evidence="1">
    <location>
        <begin position="193"/>
        <end position="218"/>
    </location>
</feature>
<feature type="topological domain" description="Extracellular" evidence="8">
    <location>
        <begin position="219"/>
        <end position="226"/>
    </location>
</feature>
<feature type="transmembrane region" description="Helical; Voltage-sensor; Name=Segment S4" evidence="1">
    <location>
        <begin position="227"/>
        <end position="242"/>
    </location>
</feature>
<feature type="topological domain" description="Cytoplasmic" evidence="8">
    <location>
        <begin position="243"/>
        <end position="260"/>
    </location>
</feature>
<feature type="transmembrane region" description="Helical; Name=Segment S5" evidence="1">
    <location>
        <begin position="261"/>
        <end position="283"/>
    </location>
</feature>
<feature type="topological domain" description="Extracellular" evidence="8">
    <location>
        <begin position="284"/>
        <end position="299"/>
    </location>
</feature>
<feature type="intramembrane region" description="Pore-forming; Name=Segment H5" evidence="1">
    <location>
        <begin position="300"/>
        <end position="320"/>
    </location>
</feature>
<feature type="topological domain" description="Extracellular" evidence="8">
    <location>
        <begin position="321"/>
        <end position="322"/>
    </location>
</feature>
<feature type="transmembrane region" description="Helical; Name=Segment S6" evidence="1">
    <location>
        <begin position="323"/>
        <end position="348"/>
    </location>
</feature>
<feature type="topological domain" description="Cytoplasmic" evidence="8">
    <location>
        <begin position="349"/>
        <end position="669"/>
    </location>
</feature>
<feature type="region of interest" description="Interaction with KCNE3" evidence="1">
    <location>
        <begin position="238"/>
        <end position="246"/>
    </location>
</feature>
<feature type="region of interest" description="Interaction with CALM" evidence="1">
    <location>
        <begin position="370"/>
        <end position="382"/>
    </location>
</feature>
<feature type="region of interest" description="Interaction with CALM; calcium-dependent" evidence="1">
    <location>
        <begin position="515"/>
        <end position="529"/>
    </location>
</feature>
<feature type="region of interest" description="Interaction with KCNE1 C-terminus" evidence="1">
    <location>
        <begin position="535"/>
        <end position="572"/>
    </location>
</feature>
<feature type="region of interest" description="Interaction with AKAP9" evidence="1">
    <location>
        <begin position="588"/>
        <end position="616"/>
    </location>
</feature>
<feature type="region of interest" description="C-terminal assembly domain (tetramerization)" evidence="1">
    <location>
        <begin position="589"/>
        <end position="620"/>
    </location>
</feature>
<feature type="coiled-coil region" evidence="1">
    <location>
        <begin position="585"/>
        <end position="621"/>
    </location>
</feature>
<feature type="binding site" evidence="1">
    <location>
        <position position="244"/>
    </location>
    <ligand>
        <name>a 1,2-diacyl-sn-glycero-3-phospho-(1D-myo-inositol-4,5-bisphosphate)</name>
        <dbReference type="ChEBI" id="CHEBI:58456"/>
    </ligand>
</feature>
<feature type="modified residue" description="Phosphoserine; by PKA" evidence="1">
    <location>
        <position position="27"/>
    </location>
</feature>
<feature type="modified residue" description="Phosphoserine" evidence="2">
    <location>
        <position position="407"/>
    </location>
</feature>
<feature type="modified residue" description="Phosphoserine" evidence="2">
    <location>
        <position position="409"/>
    </location>
</feature>
<feature type="glycosylation site" description="N-linked (GlcNAc...) asparagine" evidence="3">
    <location>
        <position position="289"/>
    </location>
</feature>
<feature type="sequence conflict" description="In Ref. 2; AAB51395." evidence="8" ref="2">
    <original>E</original>
    <variation>K</variation>
    <location>
        <position position="170"/>
    </location>
</feature>
<feature type="sequence conflict" description="In Ref. 2; AAB51395." evidence="8" ref="2">
    <original>S</original>
    <variation>T</variation>
    <location>
        <position position="182"/>
    </location>
</feature>
<feature type="sequence conflict" description="In Ref. 2; AAB51395." evidence="8" ref="2">
    <original>V</original>
    <variation>L</variation>
    <location>
        <position position="185"/>
    </location>
</feature>
<feature type="sequence conflict" description="In Ref. 2; AAB51395." evidence="8" ref="2">
    <original>V</original>
    <variation>F</variation>
    <location>
        <position position="255"/>
    </location>
</feature>
<sequence>MDTASSPPNAERKRAGWGRLLGARRGSAGLAKKCPFSLELAEGGPTGGTVYAPIAPTGAPGLAPPMSPPVSPVPAPADLGPRPRVSLDPRVSIYSTRRPLLARTHIQGRVYNFLERPTGWKCFVYHFTVFLIVLVCLIFSVLSTIEQYAALATGTLFWMEIVLVVFFGTEYVVRLWSAGCRSKYVGIWGRLRFARKPISIIDLIVVVASMVVLCVGSKGQVFATSAIRGIRFLQILRMLHVDRQGGTWRLLGSVVFIHRQELITTLYIGFLGLIFSSYFVYLAEKDAVNESGRIEFGSYADALWWGVVTVTTIGYGDKVPQTWVGKTIASCFSVFAISFFALPAGILGSGFALKVQQKQRQKHFNRQIPAAASLIQTAWRCYAAENPDSSTWKIYVRKPARSHTLLSPSPKPKKSVMVKKKKFKLDKDNGLSPGEKIFNVPHITCDPPEDRRPDHFSIDGYDSSVRKSPTLLEVSTPHFLRTNSFAEDLDLEGETLLTPITHVSQLRDHHRATIKVIRRMQYFVAKKKFQQARKPYDVRDVIEQYSQGHLNLMVRIKELQRRLDQSIGKPSLFIPISEKSKDRGSNTIGARLNRVEDKVTQLDQRLVIITDMLHQLLSLQQGGPTCNNRSQVVASDERGSINPELFLPSNSLPTYEQLTVPQTGPDEGS</sequence>
<proteinExistence type="evidence at protein level"/>
<dbReference type="EMBL" id="AJ133685">
    <property type="protein sequence ID" value="CAB38863.1"/>
    <property type="molecule type" value="mRNA"/>
</dbReference>
<dbReference type="EMBL" id="U92655">
    <property type="protein sequence ID" value="AAB51395.1"/>
    <property type="status" value="ALT_FRAME"/>
    <property type="molecule type" value="mRNA"/>
</dbReference>
<dbReference type="RefSeq" id="NP_114462.1">
    <property type="nucleotide sequence ID" value="NM_032073.1"/>
</dbReference>
<dbReference type="BMRB" id="Q9Z0N7"/>
<dbReference type="SMR" id="Q9Z0N7"/>
<dbReference type="BioGRID" id="249886">
    <property type="interactions" value="1"/>
</dbReference>
<dbReference type="FunCoup" id="Q9Z0N7">
    <property type="interactions" value="133"/>
</dbReference>
<dbReference type="STRING" id="10116.ENSRNOP00000027875"/>
<dbReference type="ChEMBL" id="CHEMBL5305045"/>
<dbReference type="GlyCosmos" id="Q9Z0N7">
    <property type="glycosylation" value="1 site, No reported glycans"/>
</dbReference>
<dbReference type="GlyGen" id="Q9Z0N7">
    <property type="glycosylation" value="3 sites"/>
</dbReference>
<dbReference type="PhosphoSitePlus" id="Q9Z0N7"/>
<dbReference type="PaxDb" id="10116-ENSRNOP00000027875"/>
<dbReference type="GeneID" id="84020"/>
<dbReference type="KEGG" id="rno:84020"/>
<dbReference type="UCSC" id="RGD:621503">
    <property type="organism name" value="rat"/>
</dbReference>
<dbReference type="AGR" id="RGD:621503"/>
<dbReference type="CTD" id="3784"/>
<dbReference type="RGD" id="621503">
    <property type="gene designation" value="Kcnq1"/>
</dbReference>
<dbReference type="eggNOG" id="KOG1419">
    <property type="taxonomic scope" value="Eukaryota"/>
</dbReference>
<dbReference type="InParanoid" id="Q9Z0N7"/>
<dbReference type="PhylomeDB" id="Q9Z0N7"/>
<dbReference type="Reactome" id="R-RNO-1296072">
    <property type="pathway name" value="Voltage gated Potassium channels"/>
</dbReference>
<dbReference type="Reactome" id="R-RNO-5576890">
    <property type="pathway name" value="Phase 3 - rapid repolarisation"/>
</dbReference>
<dbReference type="Reactome" id="R-RNO-5576893">
    <property type="pathway name" value="Phase 2 - plateau phase"/>
</dbReference>
<dbReference type="PRO" id="PR:Q9Z0N7"/>
<dbReference type="Proteomes" id="UP000002494">
    <property type="component" value="Unplaced"/>
</dbReference>
<dbReference type="GO" id="GO:0045177">
    <property type="term" value="C:apical part of cell"/>
    <property type="evidence" value="ECO:0000266"/>
    <property type="project" value="RGD"/>
</dbReference>
<dbReference type="GO" id="GO:0016324">
    <property type="term" value="C:apical plasma membrane"/>
    <property type="evidence" value="ECO:0000266"/>
    <property type="project" value="RGD"/>
</dbReference>
<dbReference type="GO" id="GO:1990794">
    <property type="term" value="C:basolateral part of cell"/>
    <property type="evidence" value="ECO:0000266"/>
    <property type="project" value="RGD"/>
</dbReference>
<dbReference type="GO" id="GO:0016323">
    <property type="term" value="C:basolateral plasma membrane"/>
    <property type="evidence" value="ECO:0000314"/>
    <property type="project" value="UniProtKB"/>
</dbReference>
<dbReference type="GO" id="GO:0097546">
    <property type="term" value="C:ciliary base"/>
    <property type="evidence" value="ECO:0000266"/>
    <property type="project" value="RGD"/>
</dbReference>
<dbReference type="GO" id="GO:0005737">
    <property type="term" value="C:cytoplasm"/>
    <property type="evidence" value="ECO:0000266"/>
    <property type="project" value="RGD"/>
</dbReference>
<dbReference type="GO" id="GO:0005769">
    <property type="term" value="C:early endosome"/>
    <property type="evidence" value="ECO:0000266"/>
    <property type="project" value="RGD"/>
</dbReference>
<dbReference type="GO" id="GO:0005783">
    <property type="term" value="C:endoplasmic reticulum"/>
    <property type="evidence" value="ECO:0000266"/>
    <property type="project" value="RGD"/>
</dbReference>
<dbReference type="GO" id="GO:0005770">
    <property type="term" value="C:late endosome"/>
    <property type="evidence" value="ECO:0000266"/>
    <property type="project" value="RGD"/>
</dbReference>
<dbReference type="GO" id="GO:0098576">
    <property type="term" value="C:lumenal side of membrane"/>
    <property type="evidence" value="ECO:0000266"/>
    <property type="project" value="RGD"/>
</dbReference>
<dbReference type="GO" id="GO:0005764">
    <property type="term" value="C:lysosome"/>
    <property type="evidence" value="ECO:0000266"/>
    <property type="project" value="RGD"/>
</dbReference>
<dbReference type="GO" id="GO:0016020">
    <property type="term" value="C:membrane"/>
    <property type="evidence" value="ECO:0000318"/>
    <property type="project" value="GO_Central"/>
</dbReference>
<dbReference type="GO" id="GO:0045121">
    <property type="term" value="C:membrane raft"/>
    <property type="evidence" value="ECO:0000250"/>
    <property type="project" value="UniProtKB"/>
</dbReference>
<dbReference type="GO" id="GO:0034702">
    <property type="term" value="C:monoatomic ion channel complex"/>
    <property type="evidence" value="ECO:0000266"/>
    <property type="project" value="RGD"/>
</dbReference>
<dbReference type="GO" id="GO:0043005">
    <property type="term" value="C:neuron projection"/>
    <property type="evidence" value="ECO:0000266"/>
    <property type="project" value="RGD"/>
</dbReference>
<dbReference type="GO" id="GO:0043025">
    <property type="term" value="C:neuronal cell body"/>
    <property type="evidence" value="ECO:0000266"/>
    <property type="project" value="RGD"/>
</dbReference>
<dbReference type="GO" id="GO:0005886">
    <property type="term" value="C:plasma membrane"/>
    <property type="evidence" value="ECO:0000266"/>
    <property type="project" value="RGD"/>
</dbReference>
<dbReference type="GO" id="GO:0034705">
    <property type="term" value="C:potassium channel complex"/>
    <property type="evidence" value="ECO:0000266"/>
    <property type="project" value="RGD"/>
</dbReference>
<dbReference type="GO" id="GO:0042383">
    <property type="term" value="C:sarcolemma"/>
    <property type="evidence" value="ECO:0000314"/>
    <property type="project" value="RGD"/>
</dbReference>
<dbReference type="GO" id="GO:0030133">
    <property type="term" value="C:transport vesicle"/>
    <property type="evidence" value="ECO:0000266"/>
    <property type="project" value="RGD"/>
</dbReference>
<dbReference type="GO" id="GO:0008076">
    <property type="term" value="C:voltage-gated potassium channel complex"/>
    <property type="evidence" value="ECO:0000314"/>
    <property type="project" value="RGD"/>
</dbReference>
<dbReference type="GO" id="GO:0042589">
    <property type="term" value="C:zymogen granule membrane"/>
    <property type="evidence" value="ECO:0000314"/>
    <property type="project" value="RGD"/>
</dbReference>
<dbReference type="GO" id="GO:0005516">
    <property type="term" value="F:calmodulin binding"/>
    <property type="evidence" value="ECO:0000266"/>
    <property type="project" value="RGD"/>
</dbReference>
<dbReference type="GO" id="GO:0005251">
    <property type="term" value="F:delayed rectifier potassium channel activity"/>
    <property type="evidence" value="ECO:0000314"/>
    <property type="project" value="UniProtKB"/>
</dbReference>
<dbReference type="GO" id="GO:0042802">
    <property type="term" value="F:identical protein binding"/>
    <property type="evidence" value="ECO:0000353"/>
    <property type="project" value="RGD"/>
</dbReference>
<dbReference type="GO" id="GO:0015271">
    <property type="term" value="F:outward rectifier potassium channel activity"/>
    <property type="evidence" value="ECO:0000314"/>
    <property type="project" value="UniProtKB"/>
</dbReference>
<dbReference type="GO" id="GO:0005546">
    <property type="term" value="F:phosphatidylinositol-4,5-bisphosphate binding"/>
    <property type="evidence" value="ECO:0000250"/>
    <property type="project" value="UniProtKB"/>
</dbReference>
<dbReference type="GO" id="GO:0005267">
    <property type="term" value="F:potassium channel activity"/>
    <property type="evidence" value="ECO:0000314"/>
    <property type="project" value="RGD"/>
</dbReference>
<dbReference type="GO" id="GO:0034236">
    <property type="term" value="F:protein kinase A catalytic subunit binding"/>
    <property type="evidence" value="ECO:0000266"/>
    <property type="project" value="RGD"/>
</dbReference>
<dbReference type="GO" id="GO:0034237">
    <property type="term" value="F:protein kinase A regulatory subunit binding"/>
    <property type="evidence" value="ECO:0000266"/>
    <property type="project" value="RGD"/>
</dbReference>
<dbReference type="GO" id="GO:0008157">
    <property type="term" value="F:protein phosphatase 1 binding"/>
    <property type="evidence" value="ECO:0000266"/>
    <property type="project" value="RGD"/>
</dbReference>
<dbReference type="GO" id="GO:0097110">
    <property type="term" value="F:scaffold protein binding"/>
    <property type="evidence" value="ECO:0000266"/>
    <property type="project" value="RGD"/>
</dbReference>
<dbReference type="GO" id="GO:0044325">
    <property type="term" value="F:transmembrane transporter binding"/>
    <property type="evidence" value="ECO:0000266"/>
    <property type="project" value="RGD"/>
</dbReference>
<dbReference type="GO" id="GO:0005249">
    <property type="term" value="F:voltage-gated potassium channel activity"/>
    <property type="evidence" value="ECO:0000266"/>
    <property type="project" value="RGD"/>
</dbReference>
<dbReference type="GO" id="GO:0086089">
    <property type="term" value="F:voltage-gated potassium channel activity involved in atrial cardiac muscle cell action potential repolarization"/>
    <property type="evidence" value="ECO:0000266"/>
    <property type="project" value="RGD"/>
</dbReference>
<dbReference type="GO" id="GO:0086008">
    <property type="term" value="F:voltage-gated potassium channel activity involved in cardiac muscle cell action potential repolarization"/>
    <property type="evidence" value="ECO:0000266"/>
    <property type="project" value="RGD"/>
</dbReference>
<dbReference type="GO" id="GO:1902282">
    <property type="term" value="F:voltage-gated potassium channel activity involved in ventricular cardiac muscle cell action potential repolarization"/>
    <property type="evidence" value="ECO:0000266"/>
    <property type="project" value="RGD"/>
</dbReference>
<dbReference type="GO" id="GO:0001508">
    <property type="term" value="P:action potential"/>
    <property type="evidence" value="ECO:0000318"/>
    <property type="project" value="GO_Central"/>
</dbReference>
<dbReference type="GO" id="GO:0071875">
    <property type="term" value="P:adrenergic receptor signaling pathway"/>
    <property type="evidence" value="ECO:0000266"/>
    <property type="project" value="RGD"/>
</dbReference>
<dbReference type="GO" id="GO:0086014">
    <property type="term" value="P:atrial cardiac muscle cell action potential"/>
    <property type="evidence" value="ECO:0000266"/>
    <property type="project" value="RGD"/>
</dbReference>
<dbReference type="GO" id="GO:0060117">
    <property type="term" value="P:auditory receptor cell development"/>
    <property type="evidence" value="ECO:0000266"/>
    <property type="project" value="RGD"/>
</dbReference>
<dbReference type="GO" id="GO:0061337">
    <property type="term" value="P:cardiac conduction"/>
    <property type="evidence" value="ECO:0000266"/>
    <property type="project" value="RGD"/>
</dbReference>
<dbReference type="GO" id="GO:0060048">
    <property type="term" value="P:cardiac muscle contraction"/>
    <property type="evidence" value="ECO:0000266"/>
    <property type="project" value="RGD"/>
</dbReference>
<dbReference type="GO" id="GO:0071320">
    <property type="term" value="P:cellular response to cAMP"/>
    <property type="evidence" value="ECO:0000266"/>
    <property type="project" value="RGD"/>
</dbReference>
<dbReference type="GO" id="GO:0071872">
    <property type="term" value="P:cellular response to epinephrine stimulus"/>
    <property type="evidence" value="ECO:0000266"/>
    <property type="project" value="RGD"/>
</dbReference>
<dbReference type="GO" id="GO:0071466">
    <property type="term" value="P:cellular response to xenobiotic stimulus"/>
    <property type="evidence" value="ECO:0000266"/>
    <property type="project" value="RGD"/>
</dbReference>
<dbReference type="GO" id="GO:0055064">
    <property type="term" value="P:chloride ion homeostasis"/>
    <property type="evidence" value="ECO:0000266"/>
    <property type="project" value="RGD"/>
</dbReference>
<dbReference type="GO" id="GO:0090102">
    <property type="term" value="P:cochlea development"/>
    <property type="evidence" value="ECO:0000266"/>
    <property type="project" value="RGD"/>
</dbReference>
<dbReference type="GO" id="GO:0035934">
    <property type="term" value="P:corticosterone secretion"/>
    <property type="evidence" value="ECO:0000266"/>
    <property type="project" value="RGD"/>
</dbReference>
<dbReference type="GO" id="GO:0050910">
    <property type="term" value="P:detection of mechanical stimulus involved in sensory perception of sound"/>
    <property type="evidence" value="ECO:0000266"/>
    <property type="project" value="RGD"/>
</dbReference>
<dbReference type="GO" id="GO:0022600">
    <property type="term" value="P:digestive system process"/>
    <property type="evidence" value="ECO:0000266"/>
    <property type="project" value="RGD"/>
</dbReference>
<dbReference type="GO" id="GO:0030218">
    <property type="term" value="P:erythrocyte differentiation"/>
    <property type="evidence" value="ECO:0000266"/>
    <property type="project" value="RGD"/>
</dbReference>
<dbReference type="GO" id="GO:0001696">
    <property type="term" value="P:gastric acid secretion"/>
    <property type="evidence" value="ECO:0000266"/>
    <property type="project" value="RGD"/>
</dbReference>
<dbReference type="GO" id="GO:0001698">
    <property type="term" value="P:gastrin-induced gastric acid secretion"/>
    <property type="evidence" value="ECO:0000266"/>
    <property type="project" value="RGD"/>
</dbReference>
<dbReference type="GO" id="GO:0006006">
    <property type="term" value="P:glucose metabolic process"/>
    <property type="evidence" value="ECO:0000266"/>
    <property type="project" value="RGD"/>
</dbReference>
<dbReference type="GO" id="GO:0007507">
    <property type="term" value="P:heart development"/>
    <property type="evidence" value="ECO:0000266"/>
    <property type="project" value="RGD"/>
</dbReference>
<dbReference type="GO" id="GO:0048839">
    <property type="term" value="P:inner ear development"/>
    <property type="evidence" value="ECO:0000250"/>
    <property type="project" value="UniProtKB"/>
</dbReference>
<dbReference type="GO" id="GO:0042472">
    <property type="term" value="P:inner ear morphogenesis"/>
    <property type="evidence" value="ECO:0000266"/>
    <property type="project" value="RGD"/>
</dbReference>
<dbReference type="GO" id="GO:0050892">
    <property type="term" value="P:intestinal absorption"/>
    <property type="evidence" value="ECO:0000315"/>
    <property type="project" value="UniProtKB"/>
</dbReference>
<dbReference type="GO" id="GO:0030644">
    <property type="term" value="P:intracellular chloride ion homeostasis"/>
    <property type="evidence" value="ECO:0000266"/>
    <property type="project" value="RGD"/>
</dbReference>
<dbReference type="GO" id="GO:0015705">
    <property type="term" value="P:iodide transport"/>
    <property type="evidence" value="ECO:0000266"/>
    <property type="project" value="RGD"/>
</dbReference>
<dbReference type="GO" id="GO:0008584">
    <property type="term" value="P:male gonad development"/>
    <property type="evidence" value="ECO:0000270"/>
    <property type="project" value="RGD"/>
</dbReference>
<dbReference type="GO" id="GO:0086009">
    <property type="term" value="P:membrane repolarization"/>
    <property type="evidence" value="ECO:0000250"/>
    <property type="project" value="UniProtKB"/>
</dbReference>
<dbReference type="GO" id="GO:0086011">
    <property type="term" value="P:membrane repolarization during action potential"/>
    <property type="evidence" value="ECO:0000266"/>
    <property type="project" value="RGD"/>
</dbReference>
<dbReference type="GO" id="GO:0098914">
    <property type="term" value="P:membrane repolarization during atrial cardiac muscle cell action potential"/>
    <property type="evidence" value="ECO:0000266"/>
    <property type="project" value="RGD"/>
</dbReference>
<dbReference type="GO" id="GO:0086013">
    <property type="term" value="P:membrane repolarization during cardiac muscle cell action potential"/>
    <property type="evidence" value="ECO:0000266"/>
    <property type="project" value="RGD"/>
</dbReference>
<dbReference type="GO" id="GO:0098915">
    <property type="term" value="P:membrane repolarization during ventricular cardiac muscle cell action potential"/>
    <property type="evidence" value="ECO:0000266"/>
    <property type="project" value="RGD"/>
</dbReference>
<dbReference type="GO" id="GO:0046676">
    <property type="term" value="P:negative regulation of insulin secretion"/>
    <property type="evidence" value="ECO:0000314"/>
    <property type="project" value="RGD"/>
</dbReference>
<dbReference type="GO" id="GO:1905515">
    <property type="term" value="P:non-motile cilium assembly"/>
    <property type="evidence" value="ECO:0000266"/>
    <property type="project" value="RGD"/>
</dbReference>
<dbReference type="GO" id="GO:0060452">
    <property type="term" value="P:positive regulation of cardiac muscle contraction"/>
    <property type="evidence" value="ECO:0000266"/>
    <property type="project" value="RGD"/>
</dbReference>
<dbReference type="GO" id="GO:0010460">
    <property type="term" value="P:positive regulation of heart rate"/>
    <property type="evidence" value="ECO:0000266"/>
    <property type="project" value="RGD"/>
</dbReference>
<dbReference type="GO" id="GO:1901381">
    <property type="term" value="P:positive regulation of potassium ion transmembrane transport"/>
    <property type="evidence" value="ECO:0000266"/>
    <property type="project" value="RGD"/>
</dbReference>
<dbReference type="GO" id="GO:0097623">
    <property type="term" value="P:potassium ion export across plasma membrane"/>
    <property type="evidence" value="ECO:0000266"/>
    <property type="project" value="RGD"/>
</dbReference>
<dbReference type="GO" id="GO:0055075">
    <property type="term" value="P:potassium ion homeostasis"/>
    <property type="evidence" value="ECO:0000266"/>
    <property type="project" value="RGD"/>
</dbReference>
<dbReference type="GO" id="GO:1990573">
    <property type="term" value="P:potassium ion import across plasma membrane"/>
    <property type="evidence" value="ECO:0000266"/>
    <property type="project" value="RGD"/>
</dbReference>
<dbReference type="GO" id="GO:0071805">
    <property type="term" value="P:potassium ion transmembrane transport"/>
    <property type="evidence" value="ECO:0000266"/>
    <property type="project" value="RGD"/>
</dbReference>
<dbReference type="GO" id="GO:0006813">
    <property type="term" value="P:potassium ion transport"/>
    <property type="evidence" value="ECO:0000314"/>
    <property type="project" value="RGD"/>
</dbReference>
<dbReference type="GO" id="GO:0060372">
    <property type="term" value="P:regulation of atrial cardiac muscle cell membrane repolarization"/>
    <property type="evidence" value="ECO:0000266"/>
    <property type="project" value="RGD"/>
</dbReference>
<dbReference type="GO" id="GO:0008217">
    <property type="term" value="P:regulation of blood pressure"/>
    <property type="evidence" value="ECO:0000266"/>
    <property type="project" value="RGD"/>
</dbReference>
<dbReference type="GO" id="GO:0060453">
    <property type="term" value="P:regulation of gastric acid secretion"/>
    <property type="evidence" value="ECO:0000250"/>
    <property type="project" value="UniProtKB"/>
</dbReference>
<dbReference type="GO" id="GO:0002027">
    <property type="term" value="P:regulation of heart rate"/>
    <property type="evidence" value="ECO:0000266"/>
    <property type="project" value="RGD"/>
</dbReference>
<dbReference type="GO" id="GO:0086091">
    <property type="term" value="P:regulation of heart rate by cardiac conduction"/>
    <property type="evidence" value="ECO:0000266"/>
    <property type="project" value="RGD"/>
</dbReference>
<dbReference type="GO" id="GO:0042391">
    <property type="term" value="P:regulation of membrane potential"/>
    <property type="evidence" value="ECO:0000314"/>
    <property type="project" value="RGD"/>
</dbReference>
<dbReference type="GO" id="GO:0060306">
    <property type="term" value="P:regulation of membrane repolarization"/>
    <property type="evidence" value="ECO:0000266"/>
    <property type="project" value="RGD"/>
</dbReference>
<dbReference type="GO" id="GO:0060307">
    <property type="term" value="P:regulation of ventricular cardiac muscle cell membrane repolarization"/>
    <property type="evidence" value="ECO:0000266"/>
    <property type="project" value="RGD"/>
</dbReference>
<dbReference type="GO" id="GO:0070293">
    <property type="term" value="P:renal absorption"/>
    <property type="evidence" value="ECO:0000250"/>
    <property type="project" value="UniProtKB"/>
</dbReference>
<dbReference type="GO" id="GO:0070294">
    <property type="term" value="P:renal sodium ion absorption"/>
    <property type="evidence" value="ECO:0000266"/>
    <property type="project" value="RGD"/>
</dbReference>
<dbReference type="GO" id="GO:0072347">
    <property type="term" value="P:response to anesthetic"/>
    <property type="evidence" value="ECO:0000314"/>
    <property type="project" value="RGD"/>
</dbReference>
<dbReference type="GO" id="GO:0032868">
    <property type="term" value="P:response to insulin"/>
    <property type="evidence" value="ECO:0000266"/>
    <property type="project" value="RGD"/>
</dbReference>
<dbReference type="GO" id="GO:0007622">
    <property type="term" value="P:rhythmic behavior"/>
    <property type="evidence" value="ECO:0000266"/>
    <property type="project" value="RGD"/>
</dbReference>
<dbReference type="GO" id="GO:0007605">
    <property type="term" value="P:sensory perception of sound"/>
    <property type="evidence" value="ECO:0000266"/>
    <property type="project" value="RGD"/>
</dbReference>
<dbReference type="GO" id="GO:0035176">
    <property type="term" value="P:social behavior"/>
    <property type="evidence" value="ECO:0000266"/>
    <property type="project" value="RGD"/>
</dbReference>
<dbReference type="GO" id="GO:0006814">
    <property type="term" value="P:sodium ion transport"/>
    <property type="evidence" value="ECO:0000266"/>
    <property type="project" value="RGD"/>
</dbReference>
<dbReference type="GO" id="GO:0062094">
    <property type="term" value="P:stomach development"/>
    <property type="evidence" value="ECO:0000266"/>
    <property type="project" value="RGD"/>
</dbReference>
<dbReference type="GO" id="GO:0086005">
    <property type="term" value="P:ventricular cardiac muscle cell action potential"/>
    <property type="evidence" value="ECO:0000266"/>
    <property type="project" value="RGD"/>
</dbReference>
<dbReference type="FunFam" id="1.10.287.70:FF:000113">
    <property type="entry name" value="Potassium voltage-gated channel subfamily KQT member 1"/>
    <property type="match status" value="1"/>
</dbReference>
<dbReference type="FunFam" id="1.20.120.350:FF:000017">
    <property type="entry name" value="potassium voltage-gated channel subfamily KQT member 1"/>
    <property type="match status" value="1"/>
</dbReference>
<dbReference type="Gene3D" id="1.10.287.70">
    <property type="match status" value="1"/>
</dbReference>
<dbReference type="Gene3D" id="6.10.140.1910">
    <property type="match status" value="2"/>
</dbReference>
<dbReference type="Gene3D" id="1.20.120.350">
    <property type="entry name" value="Voltage-gated potassium channels. Chain C"/>
    <property type="match status" value="1"/>
</dbReference>
<dbReference type="InterPro" id="IPR005821">
    <property type="entry name" value="Ion_trans_dom"/>
</dbReference>
<dbReference type="InterPro" id="IPR003937">
    <property type="entry name" value="K_chnl_volt-dep_KCNQ"/>
</dbReference>
<dbReference type="InterPro" id="IPR013821">
    <property type="entry name" value="K_chnl_volt-dep_KCNQ_C"/>
</dbReference>
<dbReference type="InterPro" id="IPR005827">
    <property type="entry name" value="K_chnl_volt-dep_KCQN1"/>
</dbReference>
<dbReference type="InterPro" id="IPR027359">
    <property type="entry name" value="Volt_channel_dom_sf"/>
</dbReference>
<dbReference type="PANTHER" id="PTHR47735:SF14">
    <property type="entry name" value="POTASSIUM VOLTAGE-GATED CHANNEL SUBFAMILY KQT MEMBER 1"/>
    <property type="match status" value="1"/>
</dbReference>
<dbReference type="PANTHER" id="PTHR47735">
    <property type="entry name" value="POTASSIUM VOLTAGE-GATED CHANNEL SUBFAMILY KQT MEMBER 4"/>
    <property type="match status" value="1"/>
</dbReference>
<dbReference type="Pfam" id="PF00520">
    <property type="entry name" value="Ion_trans"/>
    <property type="match status" value="1"/>
</dbReference>
<dbReference type="Pfam" id="PF03520">
    <property type="entry name" value="KCNQ_channel"/>
    <property type="match status" value="1"/>
</dbReference>
<dbReference type="PRINTS" id="PR00169">
    <property type="entry name" value="KCHANNEL"/>
</dbReference>
<dbReference type="PRINTS" id="PR01460">
    <property type="entry name" value="KCNQ1CHANNEL"/>
</dbReference>
<dbReference type="PRINTS" id="PR01459">
    <property type="entry name" value="KCNQCHANNEL"/>
</dbReference>
<dbReference type="SUPFAM" id="SSF81324">
    <property type="entry name" value="Voltage-gated potassium channels"/>
    <property type="match status" value="1"/>
</dbReference>
<protein>
    <recommendedName>
        <fullName evidence="8">Potassium voltage-gated channel subfamily KQT member 1</fullName>
    </recommendedName>
    <alternativeName>
        <fullName evidence="9">IKs producing slow voltage-gated potassium channel subunit alpha KvLQT1</fullName>
    </alternativeName>
    <alternativeName>
        <fullName evidence="1">KQT-like 1</fullName>
    </alternativeName>
    <alternativeName>
        <fullName evidence="1">Voltage-gated potassium channel subunit Kv7.1</fullName>
    </alternativeName>
</protein>
<reference key="1">
    <citation type="journal article" date="2001" name="J. Membr. Biol.">
        <title>Cloning and function of the rat colonic epithelial K+ channel KVLQT1.</title>
        <authorList>
            <person name="Kunzelmann K."/>
            <person name="Huebner M."/>
            <person name="Schreiber R."/>
            <person name="Levy-Holzman R."/>
            <person name="Garty H."/>
            <person name="Bleich M."/>
            <person name="Warth R."/>
            <person name="Slavik M."/>
            <person name="von Hahn T."/>
            <person name="Greger R."/>
        </authorList>
    </citation>
    <scope>NUCLEOTIDE SEQUENCE [MRNA]</scope>
    <scope>FUNCTION</scope>
    <source>
        <tissue>Colon</tissue>
    </source>
</reference>
<reference key="2">
    <citation type="journal article" date="1997" name="Circ. Res.">
        <title>Decreased expression of Kv4.2 and novel Kv4.3 K+ channel subunit mRNAs in ventricles of renovascular hypertensive rats.</title>
        <authorList>
            <person name="Takimoto K."/>
            <person name="Li D."/>
            <person name="Hershman K.M."/>
            <person name="Li P."/>
            <person name="Jackson E.K."/>
            <person name="Levitan E.S."/>
        </authorList>
    </citation>
    <scope>NUCLEOTIDE SEQUENCE [MRNA] OF 134-352</scope>
    <source>
        <strain>Sprague-Dawley</strain>
    </source>
</reference>
<reference key="3">
    <citation type="journal article" date="2011" name="J. Physiol. (Lond.)">
        <title>Sexual dimorphism and oestrogen regulation of KCNE3 expression modulates the functional properties of KCNQ1 K[+] channels.</title>
        <authorList>
            <person name="Alzamora R."/>
            <person name="O'Mahony F."/>
            <person name="Bustos V."/>
            <person name="Rapetti-Mauss R."/>
            <person name="Urbach V."/>
            <person name="Cid L.P."/>
            <person name="Sepulveda F.V."/>
            <person name="Harvey B.J."/>
        </authorList>
    </citation>
    <scope>INTERACTION WITH KCNE3</scope>
    <scope>FUNCTION</scope>
</reference>
<reference key="4">
    <citation type="journal article" date="2013" name="J. Physiol. (Lond.)">
        <title>Oestrogen promotes KCNQ1 potassium channel endocytosis and postendocytic trafficking in colonic epithelium.</title>
        <authorList>
            <person name="Rapetti-Mauss R."/>
            <person name="O'Mahony F."/>
            <person name="Sepulveda F.V."/>
            <person name="Urbach V."/>
            <person name="Harvey B.J."/>
        </authorList>
    </citation>
    <scope>SUBCELLULAR LOCATION</scope>
</reference>
<evidence type="ECO:0000250" key="1">
    <source>
        <dbReference type="UniProtKB" id="P51787"/>
    </source>
</evidence>
<evidence type="ECO:0000250" key="2">
    <source>
        <dbReference type="UniProtKB" id="P97414"/>
    </source>
</evidence>
<evidence type="ECO:0000255" key="3"/>
<evidence type="ECO:0000269" key="4">
    <source>
    </source>
</evidence>
<evidence type="ECO:0000269" key="5">
    <source>
    </source>
</evidence>
<evidence type="ECO:0000269" key="6">
    <source>
    </source>
</evidence>
<evidence type="ECO:0000303" key="7">
    <source>
    </source>
</evidence>
<evidence type="ECO:0000305" key="8"/>
<evidence type="ECO:0000305" key="9">
    <source>
    </source>
</evidence>
<evidence type="ECO:0000312" key="10">
    <source>
        <dbReference type="RGD" id="621503"/>
    </source>
</evidence>
<organism>
    <name type="scientific">Rattus norvegicus</name>
    <name type="common">Rat</name>
    <dbReference type="NCBI Taxonomy" id="10116"/>
    <lineage>
        <taxon>Eukaryota</taxon>
        <taxon>Metazoa</taxon>
        <taxon>Chordata</taxon>
        <taxon>Craniata</taxon>
        <taxon>Vertebrata</taxon>
        <taxon>Euteleostomi</taxon>
        <taxon>Mammalia</taxon>
        <taxon>Eutheria</taxon>
        <taxon>Euarchontoglires</taxon>
        <taxon>Glires</taxon>
        <taxon>Rodentia</taxon>
        <taxon>Myomorpha</taxon>
        <taxon>Muroidea</taxon>
        <taxon>Muridae</taxon>
        <taxon>Murinae</taxon>
        <taxon>Rattus</taxon>
    </lineage>
</organism>
<gene>
    <name evidence="10" type="primary">Kcnq1</name>
    <name evidence="1" type="synonym">Kcna9</name>
    <name evidence="7" type="synonym">Kvlqt1</name>
</gene>
<keyword id="KW-0112">Calmodulin-binding</keyword>
<keyword id="KW-1003">Cell membrane</keyword>
<keyword id="KW-0175">Coiled coil</keyword>
<keyword id="KW-0968">Cytoplasmic vesicle</keyword>
<keyword id="KW-0256">Endoplasmic reticulum</keyword>
<keyword id="KW-0967">Endosome</keyword>
<keyword id="KW-0325">Glycoprotein</keyword>
<keyword id="KW-0407">Ion channel</keyword>
<keyword id="KW-0406">Ion transport</keyword>
<keyword id="KW-0472">Membrane</keyword>
<keyword id="KW-0597">Phosphoprotein</keyword>
<keyword id="KW-0630">Potassium</keyword>
<keyword id="KW-0631">Potassium channel</keyword>
<keyword id="KW-0633">Potassium transport</keyword>
<keyword id="KW-1185">Reference proteome</keyword>
<keyword id="KW-0812">Transmembrane</keyword>
<keyword id="KW-1133">Transmembrane helix</keyword>
<keyword id="KW-0813">Transport</keyword>
<keyword id="KW-0832">Ubl conjugation</keyword>
<keyword id="KW-0851">Voltage-gated channel</keyword>